<protein>
    <recommendedName>
        <fullName evidence="1">Small ribosomal subunit protein bS6</fullName>
    </recommendedName>
    <alternativeName>
        <fullName evidence="3">30S ribosomal protein S6</fullName>
    </alternativeName>
</protein>
<organism>
    <name type="scientific">Borrelia recurrentis (strain A1)</name>
    <dbReference type="NCBI Taxonomy" id="412418"/>
    <lineage>
        <taxon>Bacteria</taxon>
        <taxon>Pseudomonadati</taxon>
        <taxon>Spirochaetota</taxon>
        <taxon>Spirochaetia</taxon>
        <taxon>Spirochaetales</taxon>
        <taxon>Borreliaceae</taxon>
        <taxon>Borrelia</taxon>
    </lineage>
</organism>
<accession>B5RQU2</accession>
<evidence type="ECO:0000255" key="1">
    <source>
        <dbReference type="HAMAP-Rule" id="MF_00360"/>
    </source>
</evidence>
<evidence type="ECO:0000256" key="2">
    <source>
        <dbReference type="SAM" id="MobiDB-lite"/>
    </source>
</evidence>
<evidence type="ECO:0000305" key="3"/>
<comment type="function">
    <text evidence="1">Binds together with bS18 to 16S ribosomal RNA.</text>
</comment>
<comment type="similarity">
    <text evidence="1">Belongs to the bacterial ribosomal protein bS6 family.</text>
</comment>
<name>RS6_BORRA</name>
<reference key="1">
    <citation type="journal article" date="2008" name="PLoS Genet.">
        <title>The genome of Borrelia recurrentis, the agent of deadly louse-borne relapsing fever, is a degraded subset of tick-borne Borrelia duttonii.</title>
        <authorList>
            <person name="Lescot M."/>
            <person name="Audic S."/>
            <person name="Robert C."/>
            <person name="Nguyen T.T."/>
            <person name="Blanc G."/>
            <person name="Cutler S.J."/>
            <person name="Wincker P."/>
            <person name="Couloux A."/>
            <person name="Claverie J.-M."/>
            <person name="Raoult D."/>
            <person name="Drancourt M."/>
        </authorList>
    </citation>
    <scope>NUCLEOTIDE SEQUENCE [LARGE SCALE GENOMIC DNA]</scope>
    <source>
        <strain>A1</strain>
    </source>
</reference>
<dbReference type="EMBL" id="CP000993">
    <property type="protein sequence ID" value="ACH94376.1"/>
    <property type="molecule type" value="Genomic_DNA"/>
</dbReference>
<dbReference type="RefSeq" id="WP_012538671.1">
    <property type="nucleotide sequence ID" value="NC_011244.1"/>
</dbReference>
<dbReference type="SMR" id="B5RQU2"/>
<dbReference type="KEGG" id="bre:BRE_117"/>
<dbReference type="HOGENOM" id="CLU_1902635_0_0_12"/>
<dbReference type="Proteomes" id="UP000000612">
    <property type="component" value="Chromosome"/>
</dbReference>
<dbReference type="GO" id="GO:1990904">
    <property type="term" value="C:ribonucleoprotein complex"/>
    <property type="evidence" value="ECO:0007669"/>
    <property type="project" value="UniProtKB-KW"/>
</dbReference>
<dbReference type="GO" id="GO:0005840">
    <property type="term" value="C:ribosome"/>
    <property type="evidence" value="ECO:0007669"/>
    <property type="project" value="UniProtKB-KW"/>
</dbReference>
<dbReference type="GO" id="GO:0019843">
    <property type="term" value="F:rRNA binding"/>
    <property type="evidence" value="ECO:0007669"/>
    <property type="project" value="UniProtKB-UniRule"/>
</dbReference>
<dbReference type="GO" id="GO:0003735">
    <property type="term" value="F:structural constituent of ribosome"/>
    <property type="evidence" value="ECO:0007669"/>
    <property type="project" value="InterPro"/>
</dbReference>
<dbReference type="GO" id="GO:0006412">
    <property type="term" value="P:translation"/>
    <property type="evidence" value="ECO:0007669"/>
    <property type="project" value="UniProtKB-UniRule"/>
</dbReference>
<dbReference type="CDD" id="cd00473">
    <property type="entry name" value="bS6"/>
    <property type="match status" value="1"/>
</dbReference>
<dbReference type="Gene3D" id="3.30.70.60">
    <property type="match status" value="1"/>
</dbReference>
<dbReference type="HAMAP" id="MF_00360">
    <property type="entry name" value="Ribosomal_bS6"/>
    <property type="match status" value="1"/>
</dbReference>
<dbReference type="InterPro" id="IPR000529">
    <property type="entry name" value="Ribosomal_bS6"/>
</dbReference>
<dbReference type="InterPro" id="IPR035980">
    <property type="entry name" value="Ribosomal_bS6_sf"/>
</dbReference>
<dbReference type="InterPro" id="IPR020814">
    <property type="entry name" value="Ribosomal_S6_plastid/chlpt"/>
</dbReference>
<dbReference type="InterPro" id="IPR014717">
    <property type="entry name" value="Transl_elong_EF1B/ribsomal_bS6"/>
</dbReference>
<dbReference type="NCBIfam" id="TIGR00166">
    <property type="entry name" value="S6"/>
    <property type="match status" value="1"/>
</dbReference>
<dbReference type="Pfam" id="PF01250">
    <property type="entry name" value="Ribosomal_S6"/>
    <property type="match status" value="1"/>
</dbReference>
<dbReference type="SUPFAM" id="SSF54995">
    <property type="entry name" value="Ribosomal protein S6"/>
    <property type="match status" value="1"/>
</dbReference>
<sequence>MIKKYEGCFLFRSEELEYKSALEEVKKQLVAFGAVDFVENSIGERALEYPVRKQLRGRYEIIEFKMASDNLRELEAQLKLIKNLLRYMILVKINRKVSVKKVKRRNFREYRDNKDIKEKEQPSESNVDADLKVN</sequence>
<keyword id="KW-0687">Ribonucleoprotein</keyword>
<keyword id="KW-0689">Ribosomal protein</keyword>
<keyword id="KW-0694">RNA-binding</keyword>
<keyword id="KW-0699">rRNA-binding</keyword>
<proteinExistence type="inferred from homology"/>
<feature type="chain" id="PRO_1000120714" description="Small ribosomal subunit protein bS6">
    <location>
        <begin position="1"/>
        <end position="134"/>
    </location>
</feature>
<feature type="region of interest" description="Disordered" evidence="2">
    <location>
        <begin position="113"/>
        <end position="134"/>
    </location>
</feature>
<feature type="compositionally biased region" description="Basic and acidic residues" evidence="2">
    <location>
        <begin position="113"/>
        <end position="122"/>
    </location>
</feature>
<gene>
    <name evidence="1" type="primary">rpsF</name>
    <name type="ordered locus">BRE_117</name>
</gene>